<dbReference type="EC" id="2.7.7.4" evidence="1"/>
<dbReference type="EMBL" id="CP000903">
    <property type="protein sequence ID" value="ABY42592.1"/>
    <property type="molecule type" value="Genomic_DNA"/>
</dbReference>
<dbReference type="RefSeq" id="WP_002011693.1">
    <property type="nucleotide sequence ID" value="NC_010184.1"/>
</dbReference>
<dbReference type="SMR" id="A9VLJ0"/>
<dbReference type="GeneID" id="66263527"/>
<dbReference type="KEGG" id="bwe:BcerKBAB4_1345"/>
<dbReference type="eggNOG" id="COG2046">
    <property type="taxonomic scope" value="Bacteria"/>
</dbReference>
<dbReference type="HOGENOM" id="CLU_022950_1_1_9"/>
<dbReference type="UniPathway" id="UPA00140">
    <property type="reaction ID" value="UER00204"/>
</dbReference>
<dbReference type="Proteomes" id="UP000002154">
    <property type="component" value="Chromosome"/>
</dbReference>
<dbReference type="GO" id="GO:0005524">
    <property type="term" value="F:ATP binding"/>
    <property type="evidence" value="ECO:0007669"/>
    <property type="project" value="UniProtKB-KW"/>
</dbReference>
<dbReference type="GO" id="GO:0004781">
    <property type="term" value="F:sulfate adenylyltransferase (ATP) activity"/>
    <property type="evidence" value="ECO:0007669"/>
    <property type="project" value="UniProtKB-UniRule"/>
</dbReference>
<dbReference type="GO" id="GO:0070814">
    <property type="term" value="P:hydrogen sulfide biosynthetic process"/>
    <property type="evidence" value="ECO:0007669"/>
    <property type="project" value="UniProtKB-UniRule"/>
</dbReference>
<dbReference type="GO" id="GO:0000103">
    <property type="term" value="P:sulfate assimilation"/>
    <property type="evidence" value="ECO:0007669"/>
    <property type="project" value="UniProtKB-UniRule"/>
</dbReference>
<dbReference type="CDD" id="cd00517">
    <property type="entry name" value="ATPS"/>
    <property type="match status" value="1"/>
</dbReference>
<dbReference type="Gene3D" id="3.40.50.620">
    <property type="entry name" value="HUPs"/>
    <property type="match status" value="1"/>
</dbReference>
<dbReference type="Gene3D" id="3.10.400.10">
    <property type="entry name" value="Sulfate adenylyltransferase"/>
    <property type="match status" value="1"/>
</dbReference>
<dbReference type="HAMAP" id="MF_00066">
    <property type="entry name" value="Sulf_adenylyltr"/>
    <property type="match status" value="1"/>
</dbReference>
<dbReference type="InterPro" id="IPR025980">
    <property type="entry name" value="ATP-Sase_PUA-like_dom"/>
</dbReference>
<dbReference type="InterPro" id="IPR015947">
    <property type="entry name" value="PUA-like_sf"/>
</dbReference>
<dbReference type="InterPro" id="IPR014729">
    <property type="entry name" value="Rossmann-like_a/b/a_fold"/>
</dbReference>
<dbReference type="InterPro" id="IPR020792">
    <property type="entry name" value="SO4_adenylyltransferase_pro"/>
</dbReference>
<dbReference type="InterPro" id="IPR024951">
    <property type="entry name" value="Sulfurylase_cat_dom"/>
</dbReference>
<dbReference type="InterPro" id="IPR002650">
    <property type="entry name" value="Sulphate_adenylyltransferase"/>
</dbReference>
<dbReference type="NCBIfam" id="NF003166">
    <property type="entry name" value="PRK04149.1"/>
    <property type="match status" value="1"/>
</dbReference>
<dbReference type="NCBIfam" id="TIGR00339">
    <property type="entry name" value="sopT"/>
    <property type="match status" value="1"/>
</dbReference>
<dbReference type="PANTHER" id="PTHR43509">
    <property type="match status" value="1"/>
</dbReference>
<dbReference type="PANTHER" id="PTHR43509:SF1">
    <property type="entry name" value="SULFATE ADENYLYLTRANSFERASE"/>
    <property type="match status" value="1"/>
</dbReference>
<dbReference type="Pfam" id="PF01747">
    <property type="entry name" value="ATP-sulfurylase"/>
    <property type="match status" value="1"/>
</dbReference>
<dbReference type="Pfam" id="PF14306">
    <property type="entry name" value="PUA_2"/>
    <property type="match status" value="1"/>
</dbReference>
<dbReference type="SUPFAM" id="SSF52374">
    <property type="entry name" value="Nucleotidylyl transferase"/>
    <property type="match status" value="1"/>
</dbReference>
<dbReference type="SUPFAM" id="SSF88697">
    <property type="entry name" value="PUA domain-like"/>
    <property type="match status" value="1"/>
</dbReference>
<organism>
    <name type="scientific">Bacillus mycoides (strain KBAB4)</name>
    <name type="common">Bacillus weihenstephanensis</name>
    <dbReference type="NCBI Taxonomy" id="315730"/>
    <lineage>
        <taxon>Bacteria</taxon>
        <taxon>Bacillati</taxon>
        <taxon>Bacillota</taxon>
        <taxon>Bacilli</taxon>
        <taxon>Bacillales</taxon>
        <taxon>Bacillaceae</taxon>
        <taxon>Bacillus</taxon>
        <taxon>Bacillus cereus group</taxon>
    </lineage>
</organism>
<reference key="1">
    <citation type="journal article" date="2008" name="Chem. Biol. Interact.">
        <title>Extending the Bacillus cereus group genomics to putative food-borne pathogens of different toxicity.</title>
        <authorList>
            <person name="Lapidus A."/>
            <person name="Goltsman E."/>
            <person name="Auger S."/>
            <person name="Galleron N."/>
            <person name="Segurens B."/>
            <person name="Dossat C."/>
            <person name="Land M.L."/>
            <person name="Broussolle V."/>
            <person name="Brillard J."/>
            <person name="Guinebretiere M.-H."/>
            <person name="Sanchis V."/>
            <person name="Nguen-the C."/>
            <person name="Lereclus D."/>
            <person name="Richardson P."/>
            <person name="Wincker P."/>
            <person name="Weissenbach J."/>
            <person name="Ehrlich S.D."/>
            <person name="Sorokin A."/>
        </authorList>
    </citation>
    <scope>NUCLEOTIDE SEQUENCE [LARGE SCALE GENOMIC DNA]</scope>
    <source>
        <strain>KBAB4</strain>
    </source>
</reference>
<gene>
    <name evidence="1" type="primary">sat</name>
    <name type="ordered locus">BcerKBAB4_1345</name>
</gene>
<keyword id="KW-0067">ATP-binding</keyword>
<keyword id="KW-0547">Nucleotide-binding</keyword>
<keyword id="KW-0548">Nucleotidyltransferase</keyword>
<keyword id="KW-0808">Transferase</keyword>
<name>SAT_BACMK</name>
<accession>A9VLJ0</accession>
<proteinExistence type="inferred from homology"/>
<comment type="catalytic activity">
    <reaction evidence="1">
        <text>sulfate + ATP + H(+) = adenosine 5'-phosphosulfate + diphosphate</text>
        <dbReference type="Rhea" id="RHEA:18133"/>
        <dbReference type="ChEBI" id="CHEBI:15378"/>
        <dbReference type="ChEBI" id="CHEBI:16189"/>
        <dbReference type="ChEBI" id="CHEBI:30616"/>
        <dbReference type="ChEBI" id="CHEBI:33019"/>
        <dbReference type="ChEBI" id="CHEBI:58243"/>
        <dbReference type="EC" id="2.7.7.4"/>
    </reaction>
</comment>
<comment type="pathway">
    <text evidence="1">Sulfur metabolism; hydrogen sulfide biosynthesis; sulfite from sulfate: step 1/3.</text>
</comment>
<comment type="similarity">
    <text evidence="1">Belongs to the sulfate adenylyltransferase family.</text>
</comment>
<protein>
    <recommendedName>
        <fullName evidence="1">Sulfate adenylyltransferase</fullName>
        <ecNumber evidence="1">2.7.7.4</ecNumber>
    </recommendedName>
    <alternativeName>
        <fullName evidence="1">ATP-sulfurylase</fullName>
    </alternativeName>
    <alternativeName>
        <fullName evidence="1">Sulfate adenylate transferase</fullName>
        <shortName evidence="1">SAT</shortName>
    </alternativeName>
</protein>
<evidence type="ECO:0000255" key="1">
    <source>
        <dbReference type="HAMAP-Rule" id="MF_00066"/>
    </source>
</evidence>
<sequence>MSTTNELVNRIDETYEISNIVKEIEIDKIALSDLELLATGGYSPLTGFLGKRDYDSVVETLRLANGSVWSIPITLPVTEEVAEKLQAGEEVKLVNAGNVYGVIQIEDIFVPDKEKEALLVYKTTDEAHPGVKKLYERPNVYVGGAIILTKRFGNNPFPSYHLDPIETREEFKKRGWKTVVGFQTRNPVHRAHEYIQKSALEIVDGLFLNPLVGETKSDDIPADVRMESYEVLLQNYYPKDRVFLGVFPAAMRYAGPREAIFHALVRKNFGCTHFIVGRDHAGVGDYYGTYEAQEIFTNFTVEELGITPLFFEHSFYCTKCEAMASTKTCPHGKEDRVILSGTKVREMLRNGEIPPSTFSRKEVVEVLIKGLKKEVVTE</sequence>
<feature type="chain" id="PRO_1000092254" description="Sulfate adenylyltransferase">
    <location>
        <begin position="1"/>
        <end position="378"/>
    </location>
</feature>